<feature type="chain" id="PRO_0000143157" description="Eukaryotic peptide chain release factor subunit 1">
    <location>
        <begin position="1"/>
        <end position="435"/>
    </location>
</feature>
<name>ERF1_POLMI</name>
<sequence length="435" mass="49110">MAETETTADRNVEIWKIKKLIKSLEAARGNGTSMISLIIPPKDQVSRVAKMLADEFGTASNIKSRVNRLSVLGAITSVQQRLKLYNKVPPNGLVVYCGTIVTDEGKEKKVNIDFEPFKPINTSLYLCDNKFHTEALTALLSDDNKFGFIVMDGNGALFGTLQGNTREVLHKFTVDLPKKHGRGGQSALRFARLRMEKRHNYVRKVAETAVQLFITNDRPNVTGLVLAGSADFKTELSQSDMFDQRLQVKILKLVDVSYGGENGFNQAIELSAEVLSNVKFIQEKKLIGRYFDEISQDTGKYCFGVDDTLKALEMGAVEILIVWENLDTMRYVLKNHTTDEEKILFLKPDQEKDKTHFTDKDTGVEMEMVESCSLLEWFANNYKKFGSTLEIVTDRSQEGSQFVKGFGGIGGMLRYRIDFQGMEFNDDDPDLYDDY</sequence>
<accession>Q9GR88</accession>
<reference key="1">
    <citation type="submission" date="2000-12" db="EMBL/GenBank/DDBJ databases">
        <title>cDNA clonings from Polyandrocarpa misakiensis.</title>
        <authorList>
            <person name="Sagara Y."/>
            <person name="Fujiwara S."/>
            <person name="Yubisui T."/>
        </authorList>
    </citation>
    <scope>NUCLEOTIDE SEQUENCE [MRNA]</scope>
</reference>
<protein>
    <recommendedName>
        <fullName>Eukaryotic peptide chain release factor subunit 1</fullName>
        <shortName>Eukaryotic release factor 1</shortName>
        <shortName>eRF1</shortName>
    </recommendedName>
</protein>
<organism>
    <name type="scientific">Polyandrocarpa misakiensis</name>
    <name type="common">Tunicate</name>
    <dbReference type="NCBI Taxonomy" id="7723"/>
    <lineage>
        <taxon>Eukaryota</taxon>
        <taxon>Metazoa</taxon>
        <taxon>Chordata</taxon>
        <taxon>Tunicata</taxon>
        <taxon>Ascidiacea</taxon>
        <taxon>Stolidobranchia</taxon>
        <taxon>Styelidae</taxon>
        <taxon>Polyandrocarpa</taxon>
    </lineage>
</organism>
<gene>
    <name type="primary">ERF1</name>
</gene>
<comment type="function">
    <text evidence="1">Directs the termination of nascent peptide synthesis (translation) in response to the termination codons UAA, UAG and UGA.</text>
</comment>
<comment type="subunit">
    <text>Heterodimer of two subunits, one of which binds GTP.</text>
</comment>
<comment type="subcellular location">
    <subcellularLocation>
        <location evidence="1">Cytoplasm</location>
    </subcellularLocation>
</comment>
<comment type="similarity">
    <text evidence="2">Belongs to the eukaryotic release factor 1 family.</text>
</comment>
<evidence type="ECO:0000250" key="1"/>
<evidence type="ECO:0000305" key="2"/>
<dbReference type="EMBL" id="AB053116">
    <property type="protein sequence ID" value="BAB20047.1"/>
    <property type="molecule type" value="mRNA"/>
</dbReference>
<dbReference type="SMR" id="Q9GR88"/>
<dbReference type="GO" id="GO:0005737">
    <property type="term" value="C:cytoplasm"/>
    <property type="evidence" value="ECO:0007669"/>
    <property type="project" value="UniProtKB-SubCell"/>
</dbReference>
<dbReference type="GO" id="GO:0003747">
    <property type="term" value="F:translation release factor activity"/>
    <property type="evidence" value="ECO:0007669"/>
    <property type="project" value="InterPro"/>
</dbReference>
<dbReference type="FunFam" id="3.30.1330.30:FF:000009">
    <property type="entry name" value="Eukaryotic peptide chain release factor subunit 1"/>
    <property type="match status" value="1"/>
</dbReference>
<dbReference type="FunFam" id="3.30.420.60:FF:000001">
    <property type="entry name" value="Eukaryotic peptide chain release factor subunit 1"/>
    <property type="match status" value="1"/>
</dbReference>
<dbReference type="FunFam" id="3.30.960.10:FF:000001">
    <property type="entry name" value="Eukaryotic peptide chain release factor subunit 1"/>
    <property type="match status" value="1"/>
</dbReference>
<dbReference type="Gene3D" id="3.30.1330.30">
    <property type="match status" value="1"/>
</dbReference>
<dbReference type="Gene3D" id="3.30.960.10">
    <property type="entry name" value="eRF1 domain 1"/>
    <property type="match status" value="1"/>
</dbReference>
<dbReference type="Gene3D" id="3.30.420.60">
    <property type="entry name" value="eRF1 domain 2"/>
    <property type="match status" value="1"/>
</dbReference>
<dbReference type="InterPro" id="IPR042226">
    <property type="entry name" value="eFR1_2_sf"/>
</dbReference>
<dbReference type="InterPro" id="IPR005140">
    <property type="entry name" value="eRF1_1_Pelota"/>
</dbReference>
<dbReference type="InterPro" id="IPR024049">
    <property type="entry name" value="eRF1_1_sf"/>
</dbReference>
<dbReference type="InterPro" id="IPR005141">
    <property type="entry name" value="eRF1_2"/>
</dbReference>
<dbReference type="InterPro" id="IPR005142">
    <property type="entry name" value="eRF1_3"/>
</dbReference>
<dbReference type="InterPro" id="IPR004403">
    <property type="entry name" value="Peptide_chain-rel_eRF1/aRF1"/>
</dbReference>
<dbReference type="InterPro" id="IPR029064">
    <property type="entry name" value="Ribosomal_eL30-like_sf"/>
</dbReference>
<dbReference type="NCBIfam" id="TIGR03676">
    <property type="entry name" value="aRF1_eRF1"/>
    <property type="match status" value="1"/>
</dbReference>
<dbReference type="PANTHER" id="PTHR10113">
    <property type="entry name" value="PEPTIDE CHAIN RELEASE FACTOR SUBUNIT 1"/>
    <property type="match status" value="1"/>
</dbReference>
<dbReference type="Pfam" id="PF03463">
    <property type="entry name" value="eRF1_1"/>
    <property type="match status" value="1"/>
</dbReference>
<dbReference type="Pfam" id="PF03464">
    <property type="entry name" value="eRF1_2"/>
    <property type="match status" value="1"/>
</dbReference>
<dbReference type="Pfam" id="PF03465">
    <property type="entry name" value="eRF1_3"/>
    <property type="match status" value="1"/>
</dbReference>
<dbReference type="SMART" id="SM01194">
    <property type="entry name" value="eRF1_1"/>
    <property type="match status" value="1"/>
</dbReference>
<dbReference type="SUPFAM" id="SSF55315">
    <property type="entry name" value="L30e-like"/>
    <property type="match status" value="1"/>
</dbReference>
<dbReference type="SUPFAM" id="SSF55481">
    <property type="entry name" value="N-terminal domain of eukaryotic peptide chain release factor subunit 1, ERF1"/>
    <property type="match status" value="1"/>
</dbReference>
<dbReference type="SUPFAM" id="SSF53137">
    <property type="entry name" value="Translational machinery components"/>
    <property type="match status" value="1"/>
</dbReference>
<proteinExistence type="evidence at transcript level"/>
<keyword id="KW-0963">Cytoplasm</keyword>
<keyword id="KW-0648">Protein biosynthesis</keyword>